<gene>
    <name type="ordered locus">Ta0196</name>
</gene>
<organism>
    <name type="scientific">Thermoplasma acidophilum (strain ATCC 25905 / DSM 1728 / JCM 9062 / NBRC 15155 / AMRC-C165)</name>
    <dbReference type="NCBI Taxonomy" id="273075"/>
    <lineage>
        <taxon>Archaea</taxon>
        <taxon>Methanobacteriati</taxon>
        <taxon>Thermoplasmatota</taxon>
        <taxon>Thermoplasmata</taxon>
        <taxon>Thermoplasmatales</taxon>
        <taxon>Thermoplasmataceae</taxon>
        <taxon>Thermoplasma</taxon>
    </lineage>
</organism>
<sequence length="208" mass="23294">MQFSVGNIYQPSECHTCMDDQTFISTIKTGDKKKIEEMADDLWNYRDLYQRNALMISAMYGRTDLIEFFAARYDHIDDRDIEGNTALMWAVRNNRMESAKSLIALKCSIDIPDSAGNTPICWAVIFGYTDMVKLLISSGANINISNDEGDTPAILASKYGRSECLKMLIEAGCDLNAKNHNAQNVWKAAEAFGRKEILEVLASLSNGR</sequence>
<accession>Q9HLN1</accession>
<proteinExistence type="predicted"/>
<reference key="1">
    <citation type="journal article" date="2000" name="Nature">
        <title>The genome sequence of the thermoacidophilic scavenger Thermoplasma acidophilum.</title>
        <authorList>
            <person name="Ruepp A."/>
            <person name="Graml W."/>
            <person name="Santos-Martinez M.-L."/>
            <person name="Koretke K.K."/>
            <person name="Volker C."/>
            <person name="Mewes H.-W."/>
            <person name="Frishman D."/>
            <person name="Stocker S."/>
            <person name="Lupas A.N."/>
            <person name="Baumeister W."/>
        </authorList>
    </citation>
    <scope>NUCLEOTIDE SEQUENCE [LARGE SCALE GENOMIC DNA]</scope>
    <source>
        <strain>ATCC 25905 / DSM 1728 / JCM 9062 / NBRC 15155 / AMRC-C165</strain>
    </source>
</reference>
<dbReference type="EMBL" id="AL445063">
    <property type="protein sequence ID" value="CAC11342.1"/>
    <property type="molecule type" value="Genomic_DNA"/>
</dbReference>
<dbReference type="SMR" id="Q9HLN1"/>
<dbReference type="STRING" id="273075.gene:9571412"/>
<dbReference type="PaxDb" id="273075-Ta0196"/>
<dbReference type="EnsemblBacteria" id="CAC11342">
    <property type="protein sequence ID" value="CAC11342"/>
    <property type="gene ID" value="CAC11342"/>
</dbReference>
<dbReference type="KEGG" id="tac:Ta0196"/>
<dbReference type="eggNOG" id="arCOG04004">
    <property type="taxonomic scope" value="Archaea"/>
</dbReference>
<dbReference type="HOGENOM" id="CLU_000134_18_1_2"/>
<dbReference type="InParanoid" id="Q9HLN1"/>
<dbReference type="Proteomes" id="UP000001024">
    <property type="component" value="Chromosome"/>
</dbReference>
<dbReference type="Gene3D" id="1.25.40.20">
    <property type="entry name" value="Ankyrin repeat-containing domain"/>
    <property type="match status" value="1"/>
</dbReference>
<dbReference type="InterPro" id="IPR002110">
    <property type="entry name" value="Ankyrin_rpt"/>
</dbReference>
<dbReference type="InterPro" id="IPR036770">
    <property type="entry name" value="Ankyrin_rpt-contain_sf"/>
</dbReference>
<dbReference type="PANTHER" id="PTHR24173">
    <property type="entry name" value="ANKYRIN REPEAT CONTAINING"/>
    <property type="match status" value="1"/>
</dbReference>
<dbReference type="PANTHER" id="PTHR24173:SF74">
    <property type="entry name" value="ANKYRIN REPEAT DOMAIN-CONTAINING PROTEIN 16"/>
    <property type="match status" value="1"/>
</dbReference>
<dbReference type="Pfam" id="PF12796">
    <property type="entry name" value="Ank_2"/>
    <property type="match status" value="1"/>
</dbReference>
<dbReference type="PRINTS" id="PR01415">
    <property type="entry name" value="ANKYRIN"/>
</dbReference>
<dbReference type="SMART" id="SM00248">
    <property type="entry name" value="ANK"/>
    <property type="match status" value="4"/>
</dbReference>
<dbReference type="SUPFAM" id="SSF48403">
    <property type="entry name" value="Ankyrin repeat"/>
    <property type="match status" value="1"/>
</dbReference>
<dbReference type="PROSITE" id="PS50297">
    <property type="entry name" value="ANK_REP_REGION"/>
    <property type="match status" value="1"/>
</dbReference>
<dbReference type="PROSITE" id="PS50088">
    <property type="entry name" value="ANK_REPEAT"/>
    <property type="match status" value="3"/>
</dbReference>
<protein>
    <recommendedName>
        <fullName>Putative ankyrin repeat protein Ta0196</fullName>
    </recommendedName>
</protein>
<name>Y196_THEAC</name>
<keyword id="KW-0040">ANK repeat</keyword>
<keyword id="KW-1185">Reference proteome</keyword>
<keyword id="KW-0677">Repeat</keyword>
<feature type="chain" id="PRO_0000067233" description="Putative ankyrin repeat protein Ta0196">
    <location>
        <begin position="1"/>
        <end position="208"/>
    </location>
</feature>
<feature type="repeat" description="ANK 1">
    <location>
        <begin position="49"/>
        <end position="78"/>
    </location>
</feature>
<feature type="repeat" description="ANK 2">
    <location>
        <begin position="82"/>
        <end position="111"/>
    </location>
</feature>
<feature type="repeat" description="ANK 3">
    <location>
        <begin position="115"/>
        <end position="144"/>
    </location>
</feature>
<feature type="repeat" description="ANK 4">
    <location>
        <begin position="148"/>
        <end position="177"/>
    </location>
</feature>